<reference key="1">
    <citation type="submission" date="2004-06" db="EMBL/GenBank/DDBJ databases">
        <authorList>
            <person name="Birren B.W."/>
            <person name="Stange-Thomann N."/>
            <person name="Hafez N."/>
            <person name="DeCaprio D."/>
            <person name="Fisher S."/>
            <person name="Butler J."/>
            <person name="Elkins T."/>
            <person name="Kodira C.D."/>
            <person name="Major J."/>
            <person name="Wang S."/>
            <person name="Nicol R."/>
            <person name="Nusbaum C."/>
        </authorList>
    </citation>
    <scope>NUCLEOTIDE SEQUENCE [LARGE SCALE GENOMIC DNA]</scope>
    <source>
        <strain>ATCC 33453 / NBRC 100688 / NCTC 11704 / L1</strain>
    </source>
</reference>
<name>SYD_MESFL</name>
<comment type="function">
    <text evidence="1">Catalyzes the attachment of L-aspartate to tRNA(Asp) in a two-step reaction: L-aspartate is first activated by ATP to form Asp-AMP and then transferred to the acceptor end of tRNA(Asp).</text>
</comment>
<comment type="catalytic activity">
    <reaction evidence="1">
        <text>tRNA(Asp) + L-aspartate + ATP = L-aspartyl-tRNA(Asp) + AMP + diphosphate</text>
        <dbReference type="Rhea" id="RHEA:19649"/>
        <dbReference type="Rhea" id="RHEA-COMP:9660"/>
        <dbReference type="Rhea" id="RHEA-COMP:9678"/>
        <dbReference type="ChEBI" id="CHEBI:29991"/>
        <dbReference type="ChEBI" id="CHEBI:30616"/>
        <dbReference type="ChEBI" id="CHEBI:33019"/>
        <dbReference type="ChEBI" id="CHEBI:78442"/>
        <dbReference type="ChEBI" id="CHEBI:78516"/>
        <dbReference type="ChEBI" id="CHEBI:456215"/>
        <dbReference type="EC" id="6.1.1.12"/>
    </reaction>
</comment>
<comment type="subunit">
    <text evidence="1">Homodimer.</text>
</comment>
<comment type="subcellular location">
    <subcellularLocation>
        <location evidence="1">Cytoplasm</location>
    </subcellularLocation>
</comment>
<comment type="similarity">
    <text evidence="1">Belongs to the class-II aminoacyl-tRNA synthetase family. Type 1 subfamily.</text>
</comment>
<accession>Q6F1A0</accession>
<organism>
    <name type="scientific">Mesoplasma florum (strain ATCC 33453 / NBRC 100688 / NCTC 11704 / L1)</name>
    <name type="common">Acholeplasma florum</name>
    <dbReference type="NCBI Taxonomy" id="265311"/>
    <lineage>
        <taxon>Bacteria</taxon>
        <taxon>Bacillati</taxon>
        <taxon>Mycoplasmatota</taxon>
        <taxon>Mollicutes</taxon>
        <taxon>Entomoplasmatales</taxon>
        <taxon>Entomoplasmataceae</taxon>
        <taxon>Mesoplasma</taxon>
    </lineage>
</organism>
<evidence type="ECO:0000255" key="1">
    <source>
        <dbReference type="HAMAP-Rule" id="MF_00044"/>
    </source>
</evidence>
<keyword id="KW-0030">Aminoacyl-tRNA synthetase</keyword>
<keyword id="KW-0067">ATP-binding</keyword>
<keyword id="KW-0963">Cytoplasm</keyword>
<keyword id="KW-0436">Ligase</keyword>
<keyword id="KW-0547">Nucleotide-binding</keyword>
<keyword id="KW-0648">Protein biosynthesis</keyword>
<keyword id="KW-1185">Reference proteome</keyword>
<gene>
    <name evidence="1" type="primary">aspS</name>
    <name type="ordered locus">Mfl365</name>
</gene>
<feature type="chain" id="PRO_0000110898" description="Aspartate--tRNA ligase">
    <location>
        <begin position="1"/>
        <end position="577"/>
    </location>
</feature>
<feature type="region of interest" description="Aspartate" evidence="1">
    <location>
        <begin position="193"/>
        <end position="196"/>
    </location>
</feature>
<feature type="binding site" evidence="1">
    <location>
        <position position="169"/>
    </location>
    <ligand>
        <name>L-aspartate</name>
        <dbReference type="ChEBI" id="CHEBI:29991"/>
    </ligand>
</feature>
<feature type="binding site" evidence="1">
    <location>
        <begin position="215"/>
        <end position="217"/>
    </location>
    <ligand>
        <name>ATP</name>
        <dbReference type="ChEBI" id="CHEBI:30616"/>
    </ligand>
</feature>
<feature type="binding site" evidence="1">
    <location>
        <position position="215"/>
    </location>
    <ligand>
        <name>L-aspartate</name>
        <dbReference type="ChEBI" id="CHEBI:29991"/>
    </ligand>
</feature>
<feature type="binding site" evidence="1">
    <location>
        <position position="224"/>
    </location>
    <ligand>
        <name>ATP</name>
        <dbReference type="ChEBI" id="CHEBI:30616"/>
    </ligand>
</feature>
<feature type="binding site" evidence="1">
    <location>
        <position position="440"/>
    </location>
    <ligand>
        <name>L-aspartate</name>
        <dbReference type="ChEBI" id="CHEBI:29991"/>
    </ligand>
</feature>
<feature type="binding site" evidence="1">
    <location>
        <position position="474"/>
    </location>
    <ligand>
        <name>ATP</name>
        <dbReference type="ChEBI" id="CHEBI:30616"/>
    </ligand>
</feature>
<feature type="binding site" evidence="1">
    <location>
        <position position="481"/>
    </location>
    <ligand>
        <name>L-aspartate</name>
        <dbReference type="ChEBI" id="CHEBI:29991"/>
    </ligand>
</feature>
<feature type="binding site" evidence="1">
    <location>
        <begin position="526"/>
        <end position="529"/>
    </location>
    <ligand>
        <name>ATP</name>
        <dbReference type="ChEBI" id="CHEBI:30616"/>
    </ligand>
</feature>
<sequence>MKRTHNCNQLNISNVNQEVTLKGWIKKIRKMGQITFIDLRDFYGITQIVVGENKQELINNLKPEYVISITGKVIERKSKNADIPTGEIEIEVKNIELINKSELTPFVIENDVEVSEETRMSYRYLDLRRQKIQNNMLLRAKVNSIIRKEFEADNFVEVETPYFGKSTPEGARDFLVPSRLNKNTFYALPQSPQLYKQLLMVSGFDKYYQIVRCFRDEDLRNDRQPEFTQLDMEMSFASATEVQDQIEKVIKKIFLEVKGIDFKEKLIKMPFREAIDLYGSDKPDIRFDLKINTLNEIFDKTQIKLFESFKENKLSIRGICVEELLSKKQLEILTETAKQKSFNNLAFAKFENGTWSGSIASSLSDGEKQALIKQFNIKDKATILLNVGKYEKISDMLGAVRNKVAEILNLADPNDYKLLWIIDFPLYEWSDEESRYVAAHNPFTMPNIKSIDDFETNKEDAIADSYDLVLNGFELGSGGVRITDSGIQQRMFEAVGLDDETIEKNFGWFINAYKYGAPNHAGFAFGIDRVIMLLTHSESIRDVIAFPKNSKGIDMMNDAPSYVEDNQLSELSIKTIK</sequence>
<protein>
    <recommendedName>
        <fullName evidence="1">Aspartate--tRNA ligase</fullName>
        <ecNumber evidence="1">6.1.1.12</ecNumber>
    </recommendedName>
    <alternativeName>
        <fullName evidence="1">Aspartyl-tRNA synthetase</fullName>
        <shortName evidence="1">AspRS</shortName>
    </alternativeName>
</protein>
<dbReference type="EC" id="6.1.1.12" evidence="1"/>
<dbReference type="EMBL" id="AE017263">
    <property type="protein sequence ID" value="AAT75723.1"/>
    <property type="molecule type" value="Genomic_DNA"/>
</dbReference>
<dbReference type="RefSeq" id="WP_011183263.1">
    <property type="nucleotide sequence ID" value="NC_006055.1"/>
</dbReference>
<dbReference type="RefSeq" id="YP_053607.1">
    <property type="nucleotide sequence ID" value="NC_006055.1"/>
</dbReference>
<dbReference type="SMR" id="Q6F1A0"/>
<dbReference type="STRING" id="265311.Mfl365"/>
<dbReference type="PaxDb" id="265311-Mfl365"/>
<dbReference type="EnsemblBacteria" id="AAT75723">
    <property type="protein sequence ID" value="AAT75723"/>
    <property type="gene ID" value="Mfl365"/>
</dbReference>
<dbReference type="GeneID" id="2898275"/>
<dbReference type="KEGG" id="mfl:Mfl365"/>
<dbReference type="PATRIC" id="fig|265311.5.peg.364"/>
<dbReference type="eggNOG" id="COG0173">
    <property type="taxonomic scope" value="Bacteria"/>
</dbReference>
<dbReference type="HOGENOM" id="CLU_014330_3_2_14"/>
<dbReference type="OrthoDB" id="9802326at2"/>
<dbReference type="Proteomes" id="UP000006647">
    <property type="component" value="Chromosome"/>
</dbReference>
<dbReference type="GO" id="GO:0005737">
    <property type="term" value="C:cytoplasm"/>
    <property type="evidence" value="ECO:0007669"/>
    <property type="project" value="UniProtKB-SubCell"/>
</dbReference>
<dbReference type="GO" id="GO:0004815">
    <property type="term" value="F:aspartate-tRNA ligase activity"/>
    <property type="evidence" value="ECO:0007669"/>
    <property type="project" value="UniProtKB-UniRule"/>
</dbReference>
<dbReference type="GO" id="GO:0005524">
    <property type="term" value="F:ATP binding"/>
    <property type="evidence" value="ECO:0007669"/>
    <property type="project" value="UniProtKB-UniRule"/>
</dbReference>
<dbReference type="GO" id="GO:0003676">
    <property type="term" value="F:nucleic acid binding"/>
    <property type="evidence" value="ECO:0007669"/>
    <property type="project" value="InterPro"/>
</dbReference>
<dbReference type="GO" id="GO:0006422">
    <property type="term" value="P:aspartyl-tRNA aminoacylation"/>
    <property type="evidence" value="ECO:0007669"/>
    <property type="project" value="UniProtKB-UniRule"/>
</dbReference>
<dbReference type="CDD" id="cd00777">
    <property type="entry name" value="AspRS_core"/>
    <property type="match status" value="1"/>
</dbReference>
<dbReference type="CDD" id="cd04317">
    <property type="entry name" value="EcAspRS_like_N"/>
    <property type="match status" value="1"/>
</dbReference>
<dbReference type="Gene3D" id="3.30.930.10">
    <property type="entry name" value="Bira Bifunctional Protein, Domain 2"/>
    <property type="match status" value="1"/>
</dbReference>
<dbReference type="Gene3D" id="3.30.1360.30">
    <property type="entry name" value="GAD-like domain"/>
    <property type="match status" value="1"/>
</dbReference>
<dbReference type="Gene3D" id="2.40.50.140">
    <property type="entry name" value="Nucleic acid-binding proteins"/>
    <property type="match status" value="1"/>
</dbReference>
<dbReference type="HAMAP" id="MF_00044">
    <property type="entry name" value="Asp_tRNA_synth_type1"/>
    <property type="match status" value="1"/>
</dbReference>
<dbReference type="InterPro" id="IPR004364">
    <property type="entry name" value="Aa-tRNA-synt_II"/>
</dbReference>
<dbReference type="InterPro" id="IPR006195">
    <property type="entry name" value="aa-tRNA-synth_II"/>
</dbReference>
<dbReference type="InterPro" id="IPR045864">
    <property type="entry name" value="aa-tRNA-synth_II/BPL/LPL"/>
</dbReference>
<dbReference type="InterPro" id="IPR004524">
    <property type="entry name" value="Asp-tRNA-ligase_1"/>
</dbReference>
<dbReference type="InterPro" id="IPR047089">
    <property type="entry name" value="Asp-tRNA-ligase_1_N"/>
</dbReference>
<dbReference type="InterPro" id="IPR002312">
    <property type="entry name" value="Asp/Asn-tRNA-synth_IIb"/>
</dbReference>
<dbReference type="InterPro" id="IPR047090">
    <property type="entry name" value="AspRS_core"/>
</dbReference>
<dbReference type="InterPro" id="IPR004115">
    <property type="entry name" value="GAD-like_sf"/>
</dbReference>
<dbReference type="InterPro" id="IPR029351">
    <property type="entry name" value="GAD_dom"/>
</dbReference>
<dbReference type="InterPro" id="IPR012340">
    <property type="entry name" value="NA-bd_OB-fold"/>
</dbReference>
<dbReference type="InterPro" id="IPR004365">
    <property type="entry name" value="NA-bd_OB_tRNA"/>
</dbReference>
<dbReference type="NCBIfam" id="TIGR00459">
    <property type="entry name" value="aspS_bact"/>
    <property type="match status" value="1"/>
</dbReference>
<dbReference type="NCBIfam" id="NF001750">
    <property type="entry name" value="PRK00476.1"/>
    <property type="match status" value="1"/>
</dbReference>
<dbReference type="PANTHER" id="PTHR22594:SF5">
    <property type="entry name" value="ASPARTATE--TRNA LIGASE, MITOCHONDRIAL"/>
    <property type="match status" value="1"/>
</dbReference>
<dbReference type="PANTHER" id="PTHR22594">
    <property type="entry name" value="ASPARTYL/LYSYL-TRNA SYNTHETASE"/>
    <property type="match status" value="1"/>
</dbReference>
<dbReference type="Pfam" id="PF02938">
    <property type="entry name" value="GAD"/>
    <property type="match status" value="1"/>
</dbReference>
<dbReference type="Pfam" id="PF00152">
    <property type="entry name" value="tRNA-synt_2"/>
    <property type="match status" value="1"/>
</dbReference>
<dbReference type="Pfam" id="PF01336">
    <property type="entry name" value="tRNA_anti-codon"/>
    <property type="match status" value="1"/>
</dbReference>
<dbReference type="PRINTS" id="PR01042">
    <property type="entry name" value="TRNASYNTHASP"/>
</dbReference>
<dbReference type="SUPFAM" id="SSF55681">
    <property type="entry name" value="Class II aaRS and biotin synthetases"/>
    <property type="match status" value="1"/>
</dbReference>
<dbReference type="SUPFAM" id="SSF55261">
    <property type="entry name" value="GAD domain-like"/>
    <property type="match status" value="1"/>
</dbReference>
<dbReference type="SUPFAM" id="SSF50249">
    <property type="entry name" value="Nucleic acid-binding proteins"/>
    <property type="match status" value="1"/>
</dbReference>
<dbReference type="PROSITE" id="PS50862">
    <property type="entry name" value="AA_TRNA_LIGASE_II"/>
    <property type="match status" value="1"/>
</dbReference>
<proteinExistence type="inferred from homology"/>